<sequence length="266" mass="30768">MGYFKRVVLYIIVMVVSVFIIGCNKSSDTSEKPKEDSKETQIKKSFAKTLDMYPIKNLEDLYDKEGYRDGEFKKGDKGMWTIYTDFAKSNKQGGLSNEGMVLYLDRNTRTAKGHYFVKTFYNKGKFPDRKNYKVEMKNNKIILLDKVEDINLKKRIENFKFFGQYANLKELKNYSNGDVSINENVPSYDAKFKMSNKDENVKQLRSRYNIPTDKAPVLKMHIDGDLKGSSVGYKKLEIDFSKGEKSDLSVIDSLNFQPAKVDEDDE</sequence>
<proteinExistence type="inferred from homology"/>
<accession>Q7A7G0</accession>
<feature type="signal peptide" evidence="1">
    <location>
        <begin position="1"/>
        <end position="22"/>
    </location>
</feature>
<feature type="chain" id="PRO_0000282149" description="Uncharacterized lipoprotein SA0403">
    <location>
        <begin position="23"/>
        <end position="266"/>
    </location>
</feature>
<feature type="lipid moiety-binding region" description="N-palmitoyl cysteine" evidence="1">
    <location>
        <position position="23"/>
    </location>
</feature>
<feature type="lipid moiety-binding region" description="S-diacylglycerol cysteine" evidence="1">
    <location>
        <position position="23"/>
    </location>
</feature>
<protein>
    <recommendedName>
        <fullName>Uncharacterized lipoprotein SA0403</fullName>
    </recommendedName>
</protein>
<comment type="subcellular location">
    <subcellularLocation>
        <location evidence="1">Cell membrane</location>
        <topology evidence="1">Lipid-anchor</topology>
    </subcellularLocation>
</comment>
<comment type="similarity">
    <text evidence="2">Belongs to the staphylococcal tandem lipoprotein family.</text>
</comment>
<dbReference type="EMBL" id="BA000018">
    <property type="protein sequence ID" value="BAB41632.1"/>
    <property type="molecule type" value="Genomic_DNA"/>
</dbReference>
<dbReference type="PIR" id="E89809">
    <property type="entry name" value="E89809"/>
</dbReference>
<dbReference type="RefSeq" id="WP_000540323.1">
    <property type="nucleotide sequence ID" value="NC_002745.2"/>
</dbReference>
<dbReference type="SMR" id="Q7A7G0"/>
<dbReference type="EnsemblBacteria" id="BAB41632">
    <property type="protein sequence ID" value="BAB41632"/>
    <property type="gene ID" value="BAB41632"/>
</dbReference>
<dbReference type="KEGG" id="sau:SA0403"/>
<dbReference type="HOGENOM" id="CLU_071589_0_1_9"/>
<dbReference type="GO" id="GO:0005886">
    <property type="term" value="C:plasma membrane"/>
    <property type="evidence" value="ECO:0007669"/>
    <property type="project" value="UniProtKB-SubCell"/>
</dbReference>
<dbReference type="Gene3D" id="2.50.20.40">
    <property type="match status" value="1"/>
</dbReference>
<dbReference type="InterPro" id="IPR007595">
    <property type="entry name" value="Csa"/>
</dbReference>
<dbReference type="InterPro" id="IPR038641">
    <property type="entry name" value="Csa_sf"/>
</dbReference>
<dbReference type="NCBIfam" id="TIGR01742">
    <property type="entry name" value="SA_tandem_lipo"/>
    <property type="match status" value="1"/>
</dbReference>
<dbReference type="Pfam" id="PF04507">
    <property type="entry name" value="DUF576"/>
    <property type="match status" value="1"/>
</dbReference>
<dbReference type="PROSITE" id="PS51257">
    <property type="entry name" value="PROKAR_LIPOPROTEIN"/>
    <property type="match status" value="1"/>
</dbReference>
<keyword id="KW-1003">Cell membrane</keyword>
<keyword id="KW-0449">Lipoprotein</keyword>
<keyword id="KW-0472">Membrane</keyword>
<keyword id="KW-0564">Palmitate</keyword>
<keyword id="KW-0732">Signal</keyword>
<name>Y403_STAAN</name>
<organism>
    <name type="scientific">Staphylococcus aureus (strain N315)</name>
    <dbReference type="NCBI Taxonomy" id="158879"/>
    <lineage>
        <taxon>Bacteria</taxon>
        <taxon>Bacillati</taxon>
        <taxon>Bacillota</taxon>
        <taxon>Bacilli</taxon>
        <taxon>Bacillales</taxon>
        <taxon>Staphylococcaceae</taxon>
        <taxon>Staphylococcus</taxon>
    </lineage>
</organism>
<reference key="1">
    <citation type="journal article" date="2001" name="Lancet">
        <title>Whole genome sequencing of meticillin-resistant Staphylococcus aureus.</title>
        <authorList>
            <person name="Kuroda M."/>
            <person name="Ohta T."/>
            <person name="Uchiyama I."/>
            <person name="Baba T."/>
            <person name="Yuzawa H."/>
            <person name="Kobayashi I."/>
            <person name="Cui L."/>
            <person name="Oguchi A."/>
            <person name="Aoki K."/>
            <person name="Nagai Y."/>
            <person name="Lian J.-Q."/>
            <person name="Ito T."/>
            <person name="Kanamori M."/>
            <person name="Matsumaru H."/>
            <person name="Maruyama A."/>
            <person name="Murakami H."/>
            <person name="Hosoyama A."/>
            <person name="Mizutani-Ui Y."/>
            <person name="Takahashi N.K."/>
            <person name="Sawano T."/>
            <person name="Inoue R."/>
            <person name="Kaito C."/>
            <person name="Sekimizu K."/>
            <person name="Hirakawa H."/>
            <person name="Kuhara S."/>
            <person name="Goto S."/>
            <person name="Yabuzaki J."/>
            <person name="Kanehisa M."/>
            <person name="Yamashita A."/>
            <person name="Oshima K."/>
            <person name="Furuya K."/>
            <person name="Yoshino C."/>
            <person name="Shiba T."/>
            <person name="Hattori M."/>
            <person name="Ogasawara N."/>
            <person name="Hayashi H."/>
            <person name="Hiramatsu K."/>
        </authorList>
    </citation>
    <scope>NUCLEOTIDE SEQUENCE [LARGE SCALE GENOMIC DNA]</scope>
    <source>
        <strain>N315</strain>
    </source>
</reference>
<evidence type="ECO:0000255" key="1">
    <source>
        <dbReference type="PROSITE-ProRule" id="PRU00303"/>
    </source>
</evidence>
<evidence type="ECO:0000305" key="2"/>
<gene>
    <name type="primary">lpl7</name>
    <name type="ordered locus">SA0403</name>
</gene>